<accession>Q508N2</accession>
<geneLocation type="mitochondrion"/>
<proteinExistence type="inferred from homology"/>
<protein>
    <recommendedName>
        <fullName>Cytochrome b</fullName>
    </recommendedName>
    <alternativeName>
        <fullName>Complex III subunit 3</fullName>
    </alternativeName>
    <alternativeName>
        <fullName>Complex III subunit III</fullName>
    </alternativeName>
    <alternativeName>
        <fullName>Cytochrome b-c1 complex subunit 3</fullName>
    </alternativeName>
    <alternativeName>
        <fullName>Ubiquinol-cytochrome-c reductase complex cytochrome b subunit</fullName>
    </alternativeName>
</protein>
<comment type="function">
    <text evidence="2">Component of the ubiquinol-cytochrome c reductase complex (complex III or cytochrome b-c1 complex) that is part of the mitochondrial respiratory chain. The b-c1 complex mediates electron transfer from ubiquinol to cytochrome c. Contributes to the generation of a proton gradient across the mitochondrial membrane that is then used for ATP synthesis.</text>
</comment>
<comment type="cofactor">
    <cofactor evidence="2">
        <name>heme b</name>
        <dbReference type="ChEBI" id="CHEBI:60344"/>
    </cofactor>
    <text evidence="2">Binds 2 heme b groups non-covalently.</text>
</comment>
<comment type="subunit">
    <text evidence="2">The cytochrome bc1 complex contains 11 subunits: 3 respiratory subunits (MT-CYB, CYC1 and UQCRFS1), 2 core proteins (UQCRC1 and UQCRC2) and 6 low-molecular weight proteins (UQCRH/QCR6, UQCRB/QCR7, UQCRQ/QCR8, UQCR10/QCR9, UQCR11/QCR10 and a cleavage product of UQCRFS1). This cytochrome bc1 complex then forms a dimer.</text>
</comment>
<comment type="subcellular location">
    <subcellularLocation>
        <location evidence="2">Mitochondrion inner membrane</location>
        <topology evidence="2">Multi-pass membrane protein</topology>
    </subcellularLocation>
</comment>
<comment type="miscellaneous">
    <text evidence="1">Heme 1 (or BL or b562) is low-potential and absorbs at about 562 nm, and heme 2 (or BH or b566) is high-potential and absorbs at about 566 nm.</text>
</comment>
<comment type="similarity">
    <text evidence="3 4">Belongs to the cytochrome b family.</text>
</comment>
<comment type="caution">
    <text evidence="2">The full-length protein contains only eight transmembrane helices, not nine as predicted by bioinformatics tools.</text>
</comment>
<gene>
    <name type="primary">MT-CYB</name>
    <name type="synonym">COB</name>
    <name type="synonym">CYTB</name>
    <name type="synonym">MTCYB</name>
</gene>
<name>CYB_DIPIS</name>
<organism>
    <name type="scientific">Dipodomys insularis</name>
    <name type="common">San Jose island kangaroo rat</name>
    <name type="synonym">Dipodomys merriami insularis</name>
    <dbReference type="NCBI Taxonomy" id="323373"/>
    <lineage>
        <taxon>Eukaryota</taxon>
        <taxon>Metazoa</taxon>
        <taxon>Chordata</taxon>
        <taxon>Craniata</taxon>
        <taxon>Vertebrata</taxon>
        <taxon>Euteleostomi</taxon>
        <taxon>Mammalia</taxon>
        <taxon>Eutheria</taxon>
        <taxon>Euarchontoglires</taxon>
        <taxon>Glires</taxon>
        <taxon>Rodentia</taxon>
        <taxon>Castorimorpha</taxon>
        <taxon>Heteromyidae</taxon>
        <taxon>Dipodomyinae</taxon>
        <taxon>Dipodomys</taxon>
    </lineage>
</organism>
<feature type="chain" id="PRO_0000255041" description="Cytochrome b">
    <location>
        <begin position="1"/>
        <end position="379"/>
    </location>
</feature>
<feature type="transmembrane region" description="Helical" evidence="2">
    <location>
        <begin position="33"/>
        <end position="53"/>
    </location>
</feature>
<feature type="transmembrane region" description="Helical" evidence="2">
    <location>
        <begin position="77"/>
        <end position="98"/>
    </location>
</feature>
<feature type="transmembrane region" description="Helical" evidence="2">
    <location>
        <begin position="113"/>
        <end position="133"/>
    </location>
</feature>
<feature type="transmembrane region" description="Helical" evidence="2">
    <location>
        <begin position="178"/>
        <end position="198"/>
    </location>
</feature>
<feature type="transmembrane region" description="Helical" evidence="2">
    <location>
        <begin position="226"/>
        <end position="246"/>
    </location>
</feature>
<feature type="transmembrane region" description="Helical" evidence="2">
    <location>
        <begin position="288"/>
        <end position="308"/>
    </location>
</feature>
<feature type="transmembrane region" description="Helical" evidence="2">
    <location>
        <begin position="320"/>
        <end position="340"/>
    </location>
</feature>
<feature type="transmembrane region" description="Helical" evidence="2">
    <location>
        <begin position="347"/>
        <end position="367"/>
    </location>
</feature>
<feature type="binding site" description="axial binding residue" evidence="2">
    <location>
        <position position="83"/>
    </location>
    <ligand>
        <name>heme b</name>
        <dbReference type="ChEBI" id="CHEBI:60344"/>
        <label>b562</label>
    </ligand>
    <ligandPart>
        <name>Fe</name>
        <dbReference type="ChEBI" id="CHEBI:18248"/>
    </ligandPart>
</feature>
<feature type="binding site" description="axial binding residue" evidence="2">
    <location>
        <position position="97"/>
    </location>
    <ligand>
        <name>heme b</name>
        <dbReference type="ChEBI" id="CHEBI:60344"/>
        <label>b566</label>
    </ligand>
    <ligandPart>
        <name>Fe</name>
        <dbReference type="ChEBI" id="CHEBI:18248"/>
    </ligandPart>
</feature>
<feature type="binding site" description="axial binding residue" evidence="2">
    <location>
        <position position="182"/>
    </location>
    <ligand>
        <name>heme b</name>
        <dbReference type="ChEBI" id="CHEBI:60344"/>
        <label>b562</label>
    </ligand>
    <ligandPart>
        <name>Fe</name>
        <dbReference type="ChEBI" id="CHEBI:18248"/>
    </ligandPart>
</feature>
<feature type="binding site" description="axial binding residue" evidence="2">
    <location>
        <position position="196"/>
    </location>
    <ligand>
        <name>heme b</name>
        <dbReference type="ChEBI" id="CHEBI:60344"/>
        <label>b566</label>
    </ligand>
    <ligandPart>
        <name>Fe</name>
        <dbReference type="ChEBI" id="CHEBI:18248"/>
    </ligandPart>
</feature>
<feature type="binding site" evidence="2">
    <location>
        <position position="201"/>
    </location>
    <ligand>
        <name>a ubiquinone</name>
        <dbReference type="ChEBI" id="CHEBI:16389"/>
    </ligand>
</feature>
<keyword id="KW-0249">Electron transport</keyword>
<keyword id="KW-0349">Heme</keyword>
<keyword id="KW-0408">Iron</keyword>
<keyword id="KW-0472">Membrane</keyword>
<keyword id="KW-0479">Metal-binding</keyword>
<keyword id="KW-0496">Mitochondrion</keyword>
<keyword id="KW-0999">Mitochondrion inner membrane</keyword>
<keyword id="KW-0679">Respiratory chain</keyword>
<keyword id="KW-0812">Transmembrane</keyword>
<keyword id="KW-1133">Transmembrane helix</keyword>
<keyword id="KW-0813">Transport</keyword>
<keyword id="KW-0830">Ubiquinone</keyword>
<sequence length="379" mass="42934">MTIMRKTHPLMKMVNHAFIDLPAPSNISGWWNFGSLLGLCLIIQIASGLFLAMHYTPDTTTAFSSVTHICRDVNYGWLIRYMHANGASLFFICLYLHIGRGMYYGSYSYMETWNIGIILLFLTMATAFMGYVLPWGQMSFWGATVITNLLSAIPYIGTDLVEWIWGGFSVDKATLNRFFAFHFILPFIIAAMAMVHLLFLHETGSNNPLGIPSDCDKIPFHPYYTTKDFLGIVLLLAFFFTLVLFFPDLLGDPDNYSPANPLNTPPHIKPEWYFLFAYAILRSIPNKLGGVIALVLSILVLALLPHIQTAKQRSLMFRPISQFLFWLLVSDVFVLTWIGGQPVEPPFIIIGQIASLLYFTIILAFMPIAGLIENKMLKW</sequence>
<dbReference type="EMBL" id="AY926371">
    <property type="protein sequence ID" value="AAY23214.1"/>
    <property type="molecule type" value="Genomic_DNA"/>
</dbReference>
<dbReference type="SMR" id="Q508N2"/>
<dbReference type="GO" id="GO:0005743">
    <property type="term" value="C:mitochondrial inner membrane"/>
    <property type="evidence" value="ECO:0007669"/>
    <property type="project" value="UniProtKB-SubCell"/>
</dbReference>
<dbReference type="GO" id="GO:0045275">
    <property type="term" value="C:respiratory chain complex III"/>
    <property type="evidence" value="ECO:0007669"/>
    <property type="project" value="InterPro"/>
</dbReference>
<dbReference type="GO" id="GO:0046872">
    <property type="term" value="F:metal ion binding"/>
    <property type="evidence" value="ECO:0007669"/>
    <property type="project" value="UniProtKB-KW"/>
</dbReference>
<dbReference type="GO" id="GO:0008121">
    <property type="term" value="F:ubiquinol-cytochrome-c reductase activity"/>
    <property type="evidence" value="ECO:0007669"/>
    <property type="project" value="InterPro"/>
</dbReference>
<dbReference type="GO" id="GO:0006122">
    <property type="term" value="P:mitochondrial electron transport, ubiquinol to cytochrome c"/>
    <property type="evidence" value="ECO:0007669"/>
    <property type="project" value="TreeGrafter"/>
</dbReference>
<dbReference type="CDD" id="cd00290">
    <property type="entry name" value="cytochrome_b_C"/>
    <property type="match status" value="1"/>
</dbReference>
<dbReference type="CDD" id="cd00284">
    <property type="entry name" value="Cytochrome_b_N"/>
    <property type="match status" value="1"/>
</dbReference>
<dbReference type="FunFam" id="1.20.810.10:FF:000002">
    <property type="entry name" value="Cytochrome b"/>
    <property type="match status" value="1"/>
</dbReference>
<dbReference type="Gene3D" id="1.20.810.10">
    <property type="entry name" value="Cytochrome Bc1 Complex, Chain C"/>
    <property type="match status" value="1"/>
</dbReference>
<dbReference type="InterPro" id="IPR005798">
    <property type="entry name" value="Cyt_b/b6_C"/>
</dbReference>
<dbReference type="InterPro" id="IPR036150">
    <property type="entry name" value="Cyt_b/b6_C_sf"/>
</dbReference>
<dbReference type="InterPro" id="IPR005797">
    <property type="entry name" value="Cyt_b/b6_N"/>
</dbReference>
<dbReference type="InterPro" id="IPR027387">
    <property type="entry name" value="Cytb/b6-like_sf"/>
</dbReference>
<dbReference type="InterPro" id="IPR030689">
    <property type="entry name" value="Cytochrome_b"/>
</dbReference>
<dbReference type="InterPro" id="IPR048260">
    <property type="entry name" value="Cytochrome_b_C_euk/bac"/>
</dbReference>
<dbReference type="InterPro" id="IPR048259">
    <property type="entry name" value="Cytochrome_b_N_euk/bac"/>
</dbReference>
<dbReference type="InterPro" id="IPR016174">
    <property type="entry name" value="Di-haem_cyt_TM"/>
</dbReference>
<dbReference type="PANTHER" id="PTHR19271">
    <property type="entry name" value="CYTOCHROME B"/>
    <property type="match status" value="1"/>
</dbReference>
<dbReference type="PANTHER" id="PTHR19271:SF16">
    <property type="entry name" value="CYTOCHROME B"/>
    <property type="match status" value="1"/>
</dbReference>
<dbReference type="Pfam" id="PF00032">
    <property type="entry name" value="Cytochrom_B_C"/>
    <property type="match status" value="1"/>
</dbReference>
<dbReference type="Pfam" id="PF00033">
    <property type="entry name" value="Cytochrome_B"/>
    <property type="match status" value="1"/>
</dbReference>
<dbReference type="PIRSF" id="PIRSF038885">
    <property type="entry name" value="COB"/>
    <property type="match status" value="1"/>
</dbReference>
<dbReference type="SUPFAM" id="SSF81648">
    <property type="entry name" value="a domain/subunit of cytochrome bc1 complex (Ubiquinol-cytochrome c reductase)"/>
    <property type="match status" value="1"/>
</dbReference>
<dbReference type="SUPFAM" id="SSF81342">
    <property type="entry name" value="Transmembrane di-heme cytochromes"/>
    <property type="match status" value="1"/>
</dbReference>
<dbReference type="PROSITE" id="PS51003">
    <property type="entry name" value="CYTB_CTER"/>
    <property type="match status" value="1"/>
</dbReference>
<dbReference type="PROSITE" id="PS51002">
    <property type="entry name" value="CYTB_NTER"/>
    <property type="match status" value="1"/>
</dbReference>
<evidence type="ECO:0000250" key="1"/>
<evidence type="ECO:0000250" key="2">
    <source>
        <dbReference type="UniProtKB" id="P00157"/>
    </source>
</evidence>
<evidence type="ECO:0000255" key="3">
    <source>
        <dbReference type="PROSITE-ProRule" id="PRU00967"/>
    </source>
</evidence>
<evidence type="ECO:0000255" key="4">
    <source>
        <dbReference type="PROSITE-ProRule" id="PRU00968"/>
    </source>
</evidence>
<reference key="1">
    <citation type="journal article" date="2005" name="J. Mammal.">
        <title>Phylogenetics of the new world rodent family Heteromyidae.</title>
        <authorList>
            <person name="Alexander L.F."/>
            <person name="Riddle B.R."/>
        </authorList>
    </citation>
    <scope>NUCLEOTIDE SEQUENCE [GENOMIC DNA]</scope>
    <source>
        <strain>Isolate LVT 2043</strain>
    </source>
</reference>